<proteinExistence type="predicted"/>
<dbReference type="EMBL" id="U36569">
    <property type="status" value="NOT_ANNOTATED_CDS"/>
    <property type="molecule type" value="mRNA"/>
</dbReference>
<dbReference type="SMR" id="P0DJY1"/>
<dbReference type="Proteomes" id="UP000002239">
    <property type="component" value="Genome"/>
</dbReference>
<organism>
    <name type="scientific">Rice dwarf virus (isolate Fujian)</name>
    <name type="common">RDV</name>
    <dbReference type="NCBI Taxonomy" id="142804"/>
    <lineage>
        <taxon>Viruses</taxon>
        <taxon>Riboviria</taxon>
        <taxon>Orthornavirae</taxon>
        <taxon>Duplornaviricota</taxon>
        <taxon>Resentoviricetes</taxon>
        <taxon>Reovirales</taxon>
        <taxon>Sedoreoviridae</taxon>
        <taxon>Phytoreovirus</taxon>
        <taxon>Rice dwarf virus</taxon>
    </lineage>
</organism>
<reference key="1">
    <citation type="journal article" date="1994" name="Ping Tu Hsueh Pao">
        <title>cDNA synthesis, molecular cloning and sequence analysis of rice dwarf virus segment S12.</title>
        <authorList>
            <person name="Li Y."/>
            <person name="Xue Z."/>
            <person name="Liu Y."/>
            <person name="Quan S."/>
            <person name="Pan N."/>
            <person name="Chen Z."/>
        </authorList>
    </citation>
    <scope>NUCLEOTIDE SEQUENCE [MRNA]</scope>
</reference>
<reference key="2">
    <citation type="journal article" date="1996" name="J. Virol.">
        <title>Polycistronic (tri- or bicistronic) phytoreoviral segments translatable in both plant and insect cells.</title>
        <authorList>
            <person name="Suzuki N."/>
            <person name="Sugawara M."/>
            <person name="Nuss D.L."/>
            <person name="Matsuura Y."/>
        </authorList>
    </citation>
    <scope>IDENTIFICATION</scope>
</reference>
<keyword id="KW-0175">Coiled coil</keyword>
<keyword id="KW-1185">Reference proteome</keyword>
<sequence>MLTIIRTLMAIDWLKIFCLRKSPKDEDQAHPMLDILPQTLDSVKKSSSRFPRKMLAATISILEEEVTELVTELNNTTNLTAKKECPRITNAL</sequence>
<accession>P0DJY1</accession>
<protein>
    <recommendedName>
        <fullName>Protein OP-ORF</fullName>
    </recommendedName>
</protein>
<evidence type="ECO:0000255" key="1"/>
<name>OPORF_RDVF</name>
<organismHost>
    <name type="scientific">Alopecurus aequalis</name>
    <dbReference type="NCBI Taxonomy" id="114194"/>
</organismHost>
<organismHost>
    <name type="scientific">Echinochloa crus-galli</name>
    <name type="common">Barnyard grass</name>
    <name type="synonym">Panicum crus-galli</name>
    <dbReference type="NCBI Taxonomy" id="90397"/>
</organismHost>
<organismHost>
    <name type="scientific">Nephotettix cincticeps</name>
    <name type="common">Green rice leafhopper</name>
    <name type="synonym">Selenocephalus cincticeps</name>
    <dbReference type="NCBI Taxonomy" id="94400"/>
</organismHost>
<organismHost>
    <name type="scientific">Oryza sativa</name>
    <name type="common">Rice</name>
    <dbReference type="NCBI Taxonomy" id="4530"/>
</organismHost>
<organismHost>
    <name type="scientific">Paspalum</name>
    <dbReference type="NCBI Taxonomy" id="147271"/>
</organismHost>
<feature type="chain" id="PRO_0000423166" description="Protein OP-ORF">
    <location>
        <begin position="1"/>
        <end position="92"/>
    </location>
</feature>
<feature type="coiled-coil region" evidence="1">
    <location>
        <begin position="53"/>
        <end position="82"/>
    </location>
</feature>